<organism>
    <name type="scientific">Mus musculus</name>
    <name type="common">Mouse</name>
    <dbReference type="NCBI Taxonomy" id="10090"/>
    <lineage>
        <taxon>Eukaryota</taxon>
        <taxon>Metazoa</taxon>
        <taxon>Chordata</taxon>
        <taxon>Craniata</taxon>
        <taxon>Vertebrata</taxon>
        <taxon>Euteleostomi</taxon>
        <taxon>Mammalia</taxon>
        <taxon>Eutheria</taxon>
        <taxon>Euarchontoglires</taxon>
        <taxon>Glires</taxon>
        <taxon>Rodentia</taxon>
        <taxon>Myomorpha</taxon>
        <taxon>Muroidea</taxon>
        <taxon>Muridae</taxon>
        <taxon>Murinae</taxon>
        <taxon>Mus</taxon>
        <taxon>Mus</taxon>
    </lineage>
</organism>
<keyword id="KW-0007">Acetylation</keyword>
<keyword id="KW-0963">Cytoplasm</keyword>
<keyword id="KW-0221">Differentiation</keyword>
<keyword id="KW-0488">Methylation</keyword>
<keyword id="KW-0507">mRNA processing</keyword>
<keyword id="KW-0539">Nucleus</keyword>
<keyword id="KW-0597">Phosphoprotein</keyword>
<keyword id="KW-1185">Reference proteome</keyword>
<keyword id="KW-0694">RNA-binding</keyword>
<protein>
    <recommendedName>
        <fullName evidence="1">Cleavage and polyadenylation specificity factor subunit 5</fullName>
    </recommendedName>
    <alternativeName>
        <fullName>Nucleoside diphosphate-linked moiety X motif 21</fullName>
        <shortName>Nudix motif 21</shortName>
    </alternativeName>
    <alternativeName>
        <fullName evidence="6">Nudix hydrolase 21</fullName>
    </alternativeName>
</protein>
<gene>
    <name evidence="7" type="primary">Nudt21</name>
    <name evidence="1" type="synonym">Cpsf5</name>
</gene>
<name>CPSF5_MOUSE</name>
<evidence type="ECO:0000250" key="1">
    <source>
        <dbReference type="UniProtKB" id="O43809"/>
    </source>
</evidence>
<evidence type="ECO:0000255" key="2">
    <source>
        <dbReference type="PROSITE-ProRule" id="PRU00794"/>
    </source>
</evidence>
<evidence type="ECO:0000269" key="3">
    <source>
    </source>
</evidence>
<evidence type="ECO:0000269" key="4">
    <source>
    </source>
</evidence>
<evidence type="ECO:0000269" key="5">
    <source>
    </source>
</evidence>
<evidence type="ECO:0000305" key="6"/>
<evidence type="ECO:0000312" key="7">
    <source>
        <dbReference type="MGI" id="MGI:1915469"/>
    </source>
</evidence>
<evidence type="ECO:0007744" key="8">
    <source>
    </source>
</evidence>
<evidence type="ECO:0007744" key="9">
    <source>
    </source>
</evidence>
<sequence length="227" mass="26240">MSVVPPNRSQTGWPRGVNQFGNKYIQQTKPLTLERTINLYPLTNYTFGTKEPLYEKDSSVAARFQRMREEFDKIGMRRTVEGVLIVHEHRLPHVLLLQLGTTFFKLPGGELNPGEDEVEGLKRLMTEILGRQDGVLQDWVIDDCIGNWWRPNFEPPQYPYIPAHITKPKEHKKLFLVQLQEKALFAVPKNYKLVAAPLFELYDNAPGYGPIISSLPQLLSRFNFIYN</sequence>
<comment type="function">
    <text evidence="1 4 5">Component of the cleavage factor Im (CFIm) complex that functions as an activator of the pre-mRNA 3'-end cleavage and polyadenylation processing required for the maturation of pre-mRNA into functional mRNAs. CFIm contributes to the recruitment of multiprotein complexes on specific sequences on the pre-mRNA 3'-end, so called cleavage and polyadenylation signals (pA signals). Most pre-mRNAs contain multiple pA signals, resulting in alternative cleavage and polyadenylation (APA) producing mRNAs with variable 3'-end formation. The CFIm complex acts as a key regulator of cleavage and polyadenylation site choice during APA through its binding to 5'-UGUA-3' elements localized in the 3'-untranslated region (UTR) for a huge number of pre-mRNAs. NUDT21/CPSF5 activates indirectly the mRNA 3'-processing machinery by recruiting CPSF6 and/or CPSF7. Binds to 5'-UGUA-3' elements localized upstream of pA signals that act as enhancers of pre-mRNA 3'-end processing. The homodimer mediates simultaneous sequence-specific recognition of two 5'-UGUA-3' elements within the pre-mRNA (By similarity). Plays a role in somatic cell fate transitions and pluripotency by regulating widespread changes in gene expression through an APA-dependent function (PubMed:29249356). Binds to chromatin (PubMed:18032416). Binds to, but does not hydrolyze mono- and di-adenosine nucleotides (By similarity).</text>
</comment>
<comment type="subunit">
    <text evidence="1 3">Homodimer (via N- and C-terminus); binds RNA as homodimer. Component of the cleavage factor Im (CFIm) complex which is a heterotetramer composed of two subunits of NUDT21/CPSF5 and two subunits of CPSF6 or CPSF7 or a heterodimer of CPSF6 and CPSF7. The cleavage factor Im (CFIm) complex associates with the CPSF and CSTF complexes to promote the assembly of the core mRNA 3'-processing machinery. Interacts with CPSF6 (via the RRM domain); this interaction is direct and enhances binding to RNA. Interacts with CPSF7. Interacts with FIP1L1; this interaction occurs in a RNA sequence-specific manner. Interacts with PABPN1 (By similarity). Interacts (via N-terminus) with PAPOLA (via C-terminus); this interaction is direct and diminished by acetylation (PubMed:11716503). Interacts with SNRNP70 (By similarity). Interacts with VIRMA (By similarity).</text>
</comment>
<comment type="subcellular location">
    <subcellularLocation>
        <location evidence="4">Nucleus</location>
    </subcellularLocation>
    <subcellularLocation>
        <location evidence="1">Cytoplasm</location>
    </subcellularLocation>
    <text evidence="1">Shuttles between the nucleus and the cytoplasm in a transcription- and XPO1/CRM1-independent manner, most probably in complex with the cleavage factor Im complex (CFIm). In punctate subnuclear structures localized adjacent to nuclear speckles, called paraspeckles.</text>
</comment>
<comment type="tissue specificity">
    <text evidence="4">Expressed in testis (PubMed:18032416). Expressed in male germ cells (at protein level) (PubMed:18032416).</text>
</comment>
<comment type="induction">
    <text evidence="4">Up-regulated during spermatogenesis (PubMed:18032416).</text>
</comment>
<comment type="PTM">
    <text evidence="1">Acetylated mainly by p300/CBP, recruited to the complex by CPSF6. Acetylation decreases interaction with PAPAO. Deacetylated by the class I/II HDACs, HDAC1, HDAC3 and HDAC10, and by the class III HDACs, SIRT1 and SIRT2.</text>
</comment>
<comment type="similarity">
    <text evidence="6">Belongs to the Nudix hydrolase family. CPSF5 subfamily.</text>
</comment>
<comment type="caution">
    <text evidence="6">Lacks the conserved metal-binding residues in the NUDIX motif and is not expected to have hydrolase activity.</text>
</comment>
<feature type="initiator methionine" description="Removed" evidence="1">
    <location>
        <position position="1"/>
    </location>
</feature>
<feature type="chain" id="PRO_0000057151" description="Cleavage and polyadenylation specificity factor subunit 5">
    <location>
        <begin position="2"/>
        <end position="227"/>
    </location>
</feature>
<feature type="domain" description="Nudix hydrolase" evidence="2">
    <location>
        <begin position="76"/>
        <end position="201"/>
    </location>
</feature>
<feature type="region of interest" description="Necessary for RNA-binding" evidence="1">
    <location>
        <begin position="2"/>
        <end position="147"/>
    </location>
</feature>
<feature type="region of interest" description="Necessary for interactions with PAPOLA and PABPN1" evidence="1">
    <location>
        <begin position="81"/>
        <end position="160"/>
    </location>
</feature>
<feature type="region of interest" description="Interaction with RNA" evidence="1">
    <location>
        <begin position="102"/>
        <end position="104"/>
    </location>
</feature>
<feature type="short sequence motif" description="Nudix box">
    <location>
        <begin position="109"/>
        <end position="130"/>
    </location>
</feature>
<feature type="site" description="Interaction with RNA" evidence="1">
    <location>
        <position position="55"/>
    </location>
</feature>
<feature type="site" description="Interaction with RNA" evidence="1">
    <location>
        <position position="63"/>
    </location>
</feature>
<feature type="modified residue" description="N-acetylserine" evidence="1">
    <location>
        <position position="2"/>
    </location>
</feature>
<feature type="modified residue" description="Omega-N-methylarginine" evidence="9">
    <location>
        <position position="15"/>
    </location>
</feature>
<feature type="modified residue" description="N6-acetyllysine" evidence="8">
    <location>
        <position position="23"/>
    </location>
</feature>
<feature type="modified residue" description="N6-acetyllysine" evidence="1">
    <location>
        <position position="29"/>
    </location>
</feature>
<feature type="modified residue" description="Phosphotyrosine" evidence="1">
    <location>
        <position position="40"/>
    </location>
</feature>
<feature type="modified residue" description="N6-acetyllysine" evidence="1">
    <location>
        <position position="56"/>
    </location>
</feature>
<feature type="sequence conflict" description="In Ref. 1; BAE27154." evidence="6" ref="1">
    <original>L</original>
    <variation>F</variation>
    <location>
        <position position="111"/>
    </location>
</feature>
<reference key="1">
    <citation type="journal article" date="2005" name="Science">
        <title>The transcriptional landscape of the mammalian genome.</title>
        <authorList>
            <person name="Carninci P."/>
            <person name="Kasukawa T."/>
            <person name="Katayama S."/>
            <person name="Gough J."/>
            <person name="Frith M.C."/>
            <person name="Maeda N."/>
            <person name="Oyama R."/>
            <person name="Ravasi T."/>
            <person name="Lenhard B."/>
            <person name="Wells C."/>
            <person name="Kodzius R."/>
            <person name="Shimokawa K."/>
            <person name="Bajic V.B."/>
            <person name="Brenner S.E."/>
            <person name="Batalov S."/>
            <person name="Forrest A.R."/>
            <person name="Zavolan M."/>
            <person name="Davis M.J."/>
            <person name="Wilming L.G."/>
            <person name="Aidinis V."/>
            <person name="Allen J.E."/>
            <person name="Ambesi-Impiombato A."/>
            <person name="Apweiler R."/>
            <person name="Aturaliya R.N."/>
            <person name="Bailey T.L."/>
            <person name="Bansal M."/>
            <person name="Baxter L."/>
            <person name="Beisel K.W."/>
            <person name="Bersano T."/>
            <person name="Bono H."/>
            <person name="Chalk A.M."/>
            <person name="Chiu K.P."/>
            <person name="Choudhary V."/>
            <person name="Christoffels A."/>
            <person name="Clutterbuck D.R."/>
            <person name="Crowe M.L."/>
            <person name="Dalla E."/>
            <person name="Dalrymple B.P."/>
            <person name="de Bono B."/>
            <person name="Della Gatta G."/>
            <person name="di Bernardo D."/>
            <person name="Down T."/>
            <person name="Engstrom P."/>
            <person name="Fagiolini M."/>
            <person name="Faulkner G."/>
            <person name="Fletcher C.F."/>
            <person name="Fukushima T."/>
            <person name="Furuno M."/>
            <person name="Futaki S."/>
            <person name="Gariboldi M."/>
            <person name="Georgii-Hemming P."/>
            <person name="Gingeras T.R."/>
            <person name="Gojobori T."/>
            <person name="Green R.E."/>
            <person name="Gustincich S."/>
            <person name="Harbers M."/>
            <person name="Hayashi Y."/>
            <person name="Hensch T.K."/>
            <person name="Hirokawa N."/>
            <person name="Hill D."/>
            <person name="Huminiecki L."/>
            <person name="Iacono M."/>
            <person name="Ikeo K."/>
            <person name="Iwama A."/>
            <person name="Ishikawa T."/>
            <person name="Jakt M."/>
            <person name="Kanapin A."/>
            <person name="Katoh M."/>
            <person name="Kawasawa Y."/>
            <person name="Kelso J."/>
            <person name="Kitamura H."/>
            <person name="Kitano H."/>
            <person name="Kollias G."/>
            <person name="Krishnan S.P."/>
            <person name="Kruger A."/>
            <person name="Kummerfeld S.K."/>
            <person name="Kurochkin I.V."/>
            <person name="Lareau L.F."/>
            <person name="Lazarevic D."/>
            <person name="Lipovich L."/>
            <person name="Liu J."/>
            <person name="Liuni S."/>
            <person name="McWilliam S."/>
            <person name="Madan Babu M."/>
            <person name="Madera M."/>
            <person name="Marchionni L."/>
            <person name="Matsuda H."/>
            <person name="Matsuzawa S."/>
            <person name="Miki H."/>
            <person name="Mignone F."/>
            <person name="Miyake S."/>
            <person name="Morris K."/>
            <person name="Mottagui-Tabar S."/>
            <person name="Mulder N."/>
            <person name="Nakano N."/>
            <person name="Nakauchi H."/>
            <person name="Ng P."/>
            <person name="Nilsson R."/>
            <person name="Nishiguchi S."/>
            <person name="Nishikawa S."/>
            <person name="Nori F."/>
            <person name="Ohara O."/>
            <person name="Okazaki Y."/>
            <person name="Orlando V."/>
            <person name="Pang K.C."/>
            <person name="Pavan W.J."/>
            <person name="Pavesi G."/>
            <person name="Pesole G."/>
            <person name="Petrovsky N."/>
            <person name="Piazza S."/>
            <person name="Reed J."/>
            <person name="Reid J.F."/>
            <person name="Ring B.Z."/>
            <person name="Ringwald M."/>
            <person name="Rost B."/>
            <person name="Ruan Y."/>
            <person name="Salzberg S.L."/>
            <person name="Sandelin A."/>
            <person name="Schneider C."/>
            <person name="Schoenbach C."/>
            <person name="Sekiguchi K."/>
            <person name="Semple C.A."/>
            <person name="Seno S."/>
            <person name="Sessa L."/>
            <person name="Sheng Y."/>
            <person name="Shibata Y."/>
            <person name="Shimada H."/>
            <person name="Shimada K."/>
            <person name="Silva D."/>
            <person name="Sinclair B."/>
            <person name="Sperling S."/>
            <person name="Stupka E."/>
            <person name="Sugiura K."/>
            <person name="Sultana R."/>
            <person name="Takenaka Y."/>
            <person name="Taki K."/>
            <person name="Tammoja K."/>
            <person name="Tan S.L."/>
            <person name="Tang S."/>
            <person name="Taylor M.S."/>
            <person name="Tegner J."/>
            <person name="Teichmann S.A."/>
            <person name="Ueda H.R."/>
            <person name="van Nimwegen E."/>
            <person name="Verardo R."/>
            <person name="Wei C.L."/>
            <person name="Yagi K."/>
            <person name="Yamanishi H."/>
            <person name="Zabarovsky E."/>
            <person name="Zhu S."/>
            <person name="Zimmer A."/>
            <person name="Hide W."/>
            <person name="Bult C."/>
            <person name="Grimmond S.M."/>
            <person name="Teasdale R.D."/>
            <person name="Liu E.T."/>
            <person name="Brusic V."/>
            <person name="Quackenbush J."/>
            <person name="Wahlestedt C."/>
            <person name="Mattick J.S."/>
            <person name="Hume D.A."/>
            <person name="Kai C."/>
            <person name="Sasaki D."/>
            <person name="Tomaru Y."/>
            <person name="Fukuda S."/>
            <person name="Kanamori-Katayama M."/>
            <person name="Suzuki M."/>
            <person name="Aoki J."/>
            <person name="Arakawa T."/>
            <person name="Iida J."/>
            <person name="Imamura K."/>
            <person name="Itoh M."/>
            <person name="Kato T."/>
            <person name="Kawaji H."/>
            <person name="Kawagashira N."/>
            <person name="Kawashima T."/>
            <person name="Kojima M."/>
            <person name="Kondo S."/>
            <person name="Konno H."/>
            <person name="Nakano K."/>
            <person name="Ninomiya N."/>
            <person name="Nishio T."/>
            <person name="Okada M."/>
            <person name="Plessy C."/>
            <person name="Shibata K."/>
            <person name="Shiraki T."/>
            <person name="Suzuki S."/>
            <person name="Tagami M."/>
            <person name="Waki K."/>
            <person name="Watahiki A."/>
            <person name="Okamura-Oho Y."/>
            <person name="Suzuki H."/>
            <person name="Kawai J."/>
            <person name="Hayashizaki Y."/>
        </authorList>
    </citation>
    <scope>NUCLEOTIDE SEQUENCE [LARGE SCALE MRNA]</scope>
    <source>
        <strain>C57BL/6J</strain>
        <strain>DBA/2J</strain>
        <tissue>Embryo</tissue>
        <tissue>Embryonic head</tissue>
        <tissue>Embryonic liver</tissue>
        <tissue>Testis</tissue>
    </source>
</reference>
<reference key="2">
    <citation type="journal article" date="2004" name="Genome Res.">
        <title>The status, quality, and expansion of the NIH full-length cDNA project: the Mammalian Gene Collection (MGC).</title>
        <authorList>
            <consortium name="The MGC Project Team"/>
        </authorList>
    </citation>
    <scope>NUCLEOTIDE SEQUENCE [LARGE SCALE MRNA]</scope>
    <source>
        <strain>C57BL/6J</strain>
        <strain>FVB/N</strain>
        <tissue>Embryonic brain</tissue>
        <tissue>Mammary tumor</tissue>
    </source>
</reference>
<reference key="3">
    <citation type="journal article" date="2001" name="Biochem. Biophys. Res. Commun.">
        <title>Interaction of poly(A) polymerase with the 25-kDa subunit of cleavage factor I.</title>
        <authorList>
            <person name="Kim H."/>
            <person name="Lee Y."/>
        </authorList>
    </citation>
    <scope>INTERACTION WITH PAPOLA</scope>
    <scope>DOMAIN</scope>
</reference>
<reference key="4">
    <citation type="journal article" date="2008" name="Biol. Reprod.">
        <title>Pre-messenger RNA cleavage factor I (CFIm): potential role in alternative polyadenylation during spermatogenesis.</title>
        <authorList>
            <person name="Sartini B.L."/>
            <person name="Wang H."/>
            <person name="Wang W."/>
            <person name="Millette C.F."/>
            <person name="Kilpatrick D.L."/>
        </authorList>
    </citation>
    <scope>FUNCTION</scope>
    <scope>SUBCELLULAR LOCATION</scope>
    <scope>TISSUE SPECIFICITY</scope>
    <scope>INDUCTION</scope>
    <scope>CHROMATIN BINDING</scope>
</reference>
<reference key="5">
    <citation type="journal article" date="2010" name="Cell">
        <title>A tissue-specific atlas of mouse protein phosphorylation and expression.</title>
        <authorList>
            <person name="Huttlin E.L."/>
            <person name="Jedrychowski M.P."/>
            <person name="Elias J.E."/>
            <person name="Goswami T."/>
            <person name="Rad R."/>
            <person name="Beausoleil S.A."/>
            <person name="Villen J."/>
            <person name="Haas W."/>
            <person name="Sowa M.E."/>
            <person name="Gygi S.P."/>
        </authorList>
    </citation>
    <scope>IDENTIFICATION BY MASS SPECTROMETRY [LARGE SCALE ANALYSIS]</scope>
    <source>
        <tissue>Brain</tissue>
        <tissue>Brown adipose tissue</tissue>
        <tissue>Heart</tissue>
        <tissue>Kidney</tissue>
        <tissue>Liver</tissue>
        <tissue>Lung</tissue>
        <tissue>Spleen</tissue>
        <tissue>Testis</tissue>
    </source>
</reference>
<reference key="6">
    <citation type="journal article" date="2013" name="Mol. Cell">
        <title>SIRT5-mediated lysine desuccinylation impacts diverse metabolic pathways.</title>
        <authorList>
            <person name="Park J."/>
            <person name="Chen Y."/>
            <person name="Tishkoff D.X."/>
            <person name="Peng C."/>
            <person name="Tan M."/>
            <person name="Dai L."/>
            <person name="Xie Z."/>
            <person name="Zhang Y."/>
            <person name="Zwaans B.M."/>
            <person name="Skinner M.E."/>
            <person name="Lombard D.B."/>
            <person name="Zhao Y."/>
        </authorList>
    </citation>
    <scope>ACETYLATION [LARGE SCALE ANALYSIS] AT LYS-23</scope>
    <scope>IDENTIFICATION BY MASS SPECTROMETRY [LARGE SCALE ANALYSIS]</scope>
    <source>
        <tissue>Embryonic fibroblast</tissue>
    </source>
</reference>
<reference key="7">
    <citation type="journal article" date="2014" name="Mol. Cell. Proteomics">
        <title>Immunoaffinity enrichment and mass spectrometry analysis of protein methylation.</title>
        <authorList>
            <person name="Guo A."/>
            <person name="Gu H."/>
            <person name="Zhou J."/>
            <person name="Mulhern D."/>
            <person name="Wang Y."/>
            <person name="Lee K.A."/>
            <person name="Yang V."/>
            <person name="Aguiar M."/>
            <person name="Kornhauser J."/>
            <person name="Jia X."/>
            <person name="Ren J."/>
            <person name="Beausoleil S.A."/>
            <person name="Silva J.C."/>
            <person name="Vemulapalli V."/>
            <person name="Bedford M.T."/>
            <person name="Comb M.J."/>
        </authorList>
    </citation>
    <scope>METHYLATION [LARGE SCALE ANALYSIS] AT ARG-15</scope>
    <scope>IDENTIFICATION BY MASS SPECTROMETRY [LARGE SCALE ANALYSIS]</scope>
    <source>
        <tissue>Brain</tissue>
    </source>
</reference>
<reference key="8">
    <citation type="journal article" date="2018" name="Cell">
        <title>Nudt21 controls cell fate by connecting alternative polyadenylation to chromatin signaling.</title>
        <authorList>
            <person name="Brumbaugh J."/>
            <person name="Di Stefano B."/>
            <person name="Wang X."/>
            <person name="Borkent M."/>
            <person name="Forouzmand E."/>
            <person name="Clowers K.J."/>
            <person name="Ji F."/>
            <person name="Schwarz B.A."/>
            <person name="Kalocsay M."/>
            <person name="Elledge S.J."/>
            <person name="Chen Y."/>
            <person name="Sadreyev R.I."/>
            <person name="Gygi S.P."/>
            <person name="Hu G."/>
            <person name="Shi Y."/>
            <person name="Hochedlinger K."/>
        </authorList>
    </citation>
    <scope>FUNCTION</scope>
</reference>
<proteinExistence type="evidence at protein level"/>
<dbReference type="EMBL" id="AK011688">
    <property type="protein sequence ID" value="BAB27778.1"/>
    <property type="molecule type" value="mRNA"/>
</dbReference>
<dbReference type="EMBL" id="AK019433">
    <property type="protein sequence ID" value="BAB31718.1"/>
    <property type="molecule type" value="mRNA"/>
</dbReference>
<dbReference type="EMBL" id="AK146419">
    <property type="protein sequence ID" value="BAE27154.1"/>
    <property type="molecule type" value="mRNA"/>
</dbReference>
<dbReference type="EMBL" id="AK147061">
    <property type="protein sequence ID" value="BAE27645.1"/>
    <property type="molecule type" value="mRNA"/>
</dbReference>
<dbReference type="EMBL" id="AK160147">
    <property type="protein sequence ID" value="BAE35655.1"/>
    <property type="molecule type" value="mRNA"/>
</dbReference>
<dbReference type="EMBL" id="BC008270">
    <property type="protein sequence ID" value="AAH08270.1"/>
    <property type="molecule type" value="mRNA"/>
</dbReference>
<dbReference type="EMBL" id="BC090834">
    <property type="protein sequence ID" value="AAH90834.1"/>
    <property type="molecule type" value="mRNA"/>
</dbReference>
<dbReference type="CCDS" id="CCDS40433.1"/>
<dbReference type="RefSeq" id="NP_080899.1">
    <property type="nucleotide sequence ID" value="NM_026623.3"/>
</dbReference>
<dbReference type="SMR" id="Q9CQF3"/>
<dbReference type="BioGRID" id="212736">
    <property type="interactions" value="61"/>
</dbReference>
<dbReference type="FunCoup" id="Q9CQF3">
    <property type="interactions" value="4748"/>
</dbReference>
<dbReference type="IntAct" id="Q9CQF3">
    <property type="interactions" value="2"/>
</dbReference>
<dbReference type="MINT" id="Q9CQF3"/>
<dbReference type="STRING" id="10090.ENSMUSP00000034204"/>
<dbReference type="iPTMnet" id="Q9CQF3"/>
<dbReference type="PhosphoSitePlus" id="Q9CQF3"/>
<dbReference type="jPOST" id="Q9CQF3"/>
<dbReference type="PaxDb" id="10090-ENSMUSP00000034204"/>
<dbReference type="PeptideAtlas" id="Q9CQF3"/>
<dbReference type="ProteomicsDB" id="284003"/>
<dbReference type="Pumba" id="Q9CQF3"/>
<dbReference type="TopDownProteomics" id="Q9CQF3"/>
<dbReference type="Antibodypedia" id="14781">
    <property type="antibodies" value="239 antibodies from 28 providers"/>
</dbReference>
<dbReference type="DNASU" id="68219"/>
<dbReference type="Ensembl" id="ENSMUST00000034204.11">
    <property type="protein sequence ID" value="ENSMUSP00000034204.10"/>
    <property type="gene ID" value="ENSMUSG00000031754.11"/>
</dbReference>
<dbReference type="GeneID" id="68219"/>
<dbReference type="KEGG" id="mmu:68219"/>
<dbReference type="UCSC" id="uc009mvo.1">
    <property type="organism name" value="mouse"/>
</dbReference>
<dbReference type="AGR" id="MGI:1915469"/>
<dbReference type="CTD" id="11051"/>
<dbReference type="MGI" id="MGI:1915469">
    <property type="gene designation" value="Nudt21"/>
</dbReference>
<dbReference type="VEuPathDB" id="HostDB:ENSMUSG00000031754"/>
<dbReference type="eggNOG" id="KOG1689">
    <property type="taxonomic scope" value="Eukaryota"/>
</dbReference>
<dbReference type="GeneTree" id="ENSGT00390000015814"/>
<dbReference type="HOGENOM" id="CLU_068704_2_1_1"/>
<dbReference type="InParanoid" id="Q9CQF3"/>
<dbReference type="OMA" id="NDEWEIG"/>
<dbReference type="OrthoDB" id="277288at2759"/>
<dbReference type="PhylomeDB" id="Q9CQF3"/>
<dbReference type="TreeFam" id="TF106356"/>
<dbReference type="Reactome" id="R-MMU-72187">
    <property type="pathway name" value="mRNA 3'-end processing"/>
</dbReference>
<dbReference type="Reactome" id="R-MMU-72203">
    <property type="pathway name" value="Processing of Capped Intron-Containing Pre-mRNA"/>
</dbReference>
<dbReference type="Reactome" id="R-MMU-73856">
    <property type="pathway name" value="RNA Polymerase II Transcription Termination"/>
</dbReference>
<dbReference type="Reactome" id="R-MMU-77595">
    <property type="pathway name" value="Processing of Intronless Pre-mRNAs"/>
</dbReference>
<dbReference type="BioGRID-ORCS" id="68219">
    <property type="hits" value="28 hits in 75 CRISPR screens"/>
</dbReference>
<dbReference type="ChiTaRS" id="Nudt21">
    <property type="organism name" value="mouse"/>
</dbReference>
<dbReference type="PRO" id="PR:Q9CQF3"/>
<dbReference type="Proteomes" id="UP000000589">
    <property type="component" value="Chromosome 8"/>
</dbReference>
<dbReference type="RNAct" id="Q9CQF3">
    <property type="molecule type" value="protein"/>
</dbReference>
<dbReference type="Bgee" id="ENSMUSG00000031754">
    <property type="expression patterns" value="Expressed in superior cervical ganglion and 256 other cell types or tissues"/>
</dbReference>
<dbReference type="ExpressionAtlas" id="Q9CQF3">
    <property type="expression patterns" value="baseline and differential"/>
</dbReference>
<dbReference type="GO" id="GO:0034451">
    <property type="term" value="C:centriolar satellite"/>
    <property type="evidence" value="ECO:0007669"/>
    <property type="project" value="Ensembl"/>
</dbReference>
<dbReference type="GO" id="GO:0005737">
    <property type="term" value="C:cytoplasm"/>
    <property type="evidence" value="ECO:0000250"/>
    <property type="project" value="UniProtKB"/>
</dbReference>
<dbReference type="GO" id="GO:0005847">
    <property type="term" value="C:mRNA cleavage and polyadenylation specificity factor complex"/>
    <property type="evidence" value="ECO:0007669"/>
    <property type="project" value="Ensembl"/>
</dbReference>
<dbReference type="GO" id="GO:0005849">
    <property type="term" value="C:mRNA cleavage factor complex"/>
    <property type="evidence" value="ECO:0000250"/>
    <property type="project" value="UniProtKB"/>
</dbReference>
<dbReference type="GO" id="GO:0005634">
    <property type="term" value="C:nucleus"/>
    <property type="evidence" value="ECO:0000314"/>
    <property type="project" value="UniProtKB"/>
</dbReference>
<dbReference type="GO" id="GO:0042382">
    <property type="term" value="C:paraspeckles"/>
    <property type="evidence" value="ECO:0000250"/>
    <property type="project" value="UniProtKB"/>
</dbReference>
<dbReference type="GO" id="GO:0003682">
    <property type="term" value="F:chromatin binding"/>
    <property type="evidence" value="ECO:0000314"/>
    <property type="project" value="UniProtKB"/>
</dbReference>
<dbReference type="GO" id="GO:0042826">
    <property type="term" value="F:histone deacetylase binding"/>
    <property type="evidence" value="ECO:0007669"/>
    <property type="project" value="Ensembl"/>
</dbReference>
<dbReference type="GO" id="GO:0042802">
    <property type="term" value="F:identical protein binding"/>
    <property type="evidence" value="ECO:0000250"/>
    <property type="project" value="UniProtKB"/>
</dbReference>
<dbReference type="GO" id="GO:0035925">
    <property type="term" value="F:mRNA 3'-UTR AU-rich region binding"/>
    <property type="evidence" value="ECO:0000250"/>
    <property type="project" value="UniProtKB"/>
</dbReference>
<dbReference type="GO" id="GO:0003729">
    <property type="term" value="F:mRNA binding"/>
    <property type="evidence" value="ECO:0000250"/>
    <property type="project" value="UniProtKB"/>
</dbReference>
<dbReference type="GO" id="GO:0042803">
    <property type="term" value="F:protein homodimerization activity"/>
    <property type="evidence" value="ECO:0007669"/>
    <property type="project" value="Ensembl"/>
</dbReference>
<dbReference type="GO" id="GO:0030154">
    <property type="term" value="P:cell differentiation"/>
    <property type="evidence" value="ECO:0007669"/>
    <property type="project" value="UniProtKB-KW"/>
</dbReference>
<dbReference type="GO" id="GO:0180010">
    <property type="term" value="P:co-transcriptional mRNA 3'-end processing, cleavage and polyadenylation pathway"/>
    <property type="evidence" value="ECO:0000250"/>
    <property type="project" value="UniProtKB"/>
</dbReference>
<dbReference type="GO" id="GO:0031124">
    <property type="term" value="P:mRNA 3'-end processing"/>
    <property type="evidence" value="ECO:0000250"/>
    <property type="project" value="UniProtKB"/>
</dbReference>
<dbReference type="GO" id="GO:0110104">
    <property type="term" value="P:mRNA alternative polyadenylation"/>
    <property type="evidence" value="ECO:0000250"/>
    <property type="project" value="UniProtKB"/>
</dbReference>
<dbReference type="GO" id="GO:0006397">
    <property type="term" value="P:mRNA processing"/>
    <property type="evidence" value="ECO:0000250"/>
    <property type="project" value="UniProtKB"/>
</dbReference>
<dbReference type="GO" id="GO:2000975">
    <property type="term" value="P:positive regulation of pro-B cell differentiation"/>
    <property type="evidence" value="ECO:0000315"/>
    <property type="project" value="UniProtKB"/>
</dbReference>
<dbReference type="GO" id="GO:2000738">
    <property type="term" value="P:positive regulation of stem cell differentiation"/>
    <property type="evidence" value="ECO:0000315"/>
    <property type="project" value="UniProtKB"/>
</dbReference>
<dbReference type="GO" id="GO:0010608">
    <property type="term" value="P:post-transcriptional regulation of gene expression"/>
    <property type="evidence" value="ECO:0000315"/>
    <property type="project" value="UniProtKB"/>
</dbReference>
<dbReference type="GO" id="GO:0051290">
    <property type="term" value="P:protein heterotetramerization"/>
    <property type="evidence" value="ECO:0000250"/>
    <property type="project" value="UniProtKB"/>
</dbReference>
<dbReference type="CDD" id="cd18871">
    <property type="entry name" value="NUDIX_Cfim25_Nudt21"/>
    <property type="match status" value="1"/>
</dbReference>
<dbReference type="FunFam" id="3.90.79.10:FF:000008">
    <property type="entry name" value="cleavage and polyadenylation specificity factor subunit 5"/>
    <property type="match status" value="1"/>
</dbReference>
<dbReference type="Gene3D" id="3.90.79.10">
    <property type="entry name" value="Nucleoside Triphosphate Pyrophosphohydrolase"/>
    <property type="match status" value="1"/>
</dbReference>
<dbReference type="InterPro" id="IPR016706">
    <property type="entry name" value="Cleav_polyA_spec_factor_su5"/>
</dbReference>
<dbReference type="InterPro" id="IPR015797">
    <property type="entry name" value="NUDIX_hydrolase-like_dom_sf"/>
</dbReference>
<dbReference type="InterPro" id="IPR000086">
    <property type="entry name" value="NUDIX_hydrolase_dom"/>
</dbReference>
<dbReference type="PANTHER" id="PTHR13047">
    <property type="entry name" value="PRE-MRNA CLEAVAGE FACTOR IM, 25KD SUBUNIT"/>
    <property type="match status" value="1"/>
</dbReference>
<dbReference type="Pfam" id="PF13869">
    <property type="entry name" value="NUDIX_2"/>
    <property type="match status" value="1"/>
</dbReference>
<dbReference type="PIRSF" id="PIRSF017888">
    <property type="entry name" value="CPSF-25"/>
    <property type="match status" value="1"/>
</dbReference>
<dbReference type="SUPFAM" id="SSF55811">
    <property type="entry name" value="Nudix"/>
    <property type="match status" value="1"/>
</dbReference>
<dbReference type="PROSITE" id="PS51462">
    <property type="entry name" value="NUDIX"/>
    <property type="match status" value="1"/>
</dbReference>
<accession>Q9CQF3</accession>
<accession>Q3UJK1</accession>